<protein>
    <recommendedName>
        <fullName evidence="1">5'-nucleotidase SurE</fullName>
        <ecNumber evidence="1">3.1.3.5</ecNumber>
    </recommendedName>
    <alternativeName>
        <fullName evidence="1">Nucleoside 5'-monophosphate phosphohydrolase</fullName>
    </alternativeName>
</protein>
<comment type="function">
    <text evidence="1">Nucleotidase that shows phosphatase activity on nucleoside 5'-monophosphates.</text>
</comment>
<comment type="catalytic activity">
    <reaction evidence="1">
        <text>a ribonucleoside 5'-phosphate + H2O = a ribonucleoside + phosphate</text>
        <dbReference type="Rhea" id="RHEA:12484"/>
        <dbReference type="ChEBI" id="CHEBI:15377"/>
        <dbReference type="ChEBI" id="CHEBI:18254"/>
        <dbReference type="ChEBI" id="CHEBI:43474"/>
        <dbReference type="ChEBI" id="CHEBI:58043"/>
        <dbReference type="EC" id="3.1.3.5"/>
    </reaction>
</comment>
<comment type="cofactor">
    <cofactor evidence="1">
        <name>a divalent metal cation</name>
        <dbReference type="ChEBI" id="CHEBI:60240"/>
    </cofactor>
    <text evidence="1">Binds 1 divalent metal cation per subunit.</text>
</comment>
<comment type="subcellular location">
    <subcellularLocation>
        <location evidence="1">Cytoplasm</location>
    </subcellularLocation>
</comment>
<comment type="similarity">
    <text evidence="1">Belongs to the SurE nucleotidase family.</text>
</comment>
<organism>
    <name type="scientific">Jannaschia sp. (strain CCS1)</name>
    <dbReference type="NCBI Taxonomy" id="290400"/>
    <lineage>
        <taxon>Bacteria</taxon>
        <taxon>Pseudomonadati</taxon>
        <taxon>Pseudomonadota</taxon>
        <taxon>Alphaproteobacteria</taxon>
        <taxon>Rhodobacterales</taxon>
        <taxon>Roseobacteraceae</taxon>
        <taxon>Jannaschia</taxon>
    </lineage>
</organism>
<dbReference type="EC" id="3.1.3.5" evidence="1"/>
<dbReference type="EMBL" id="CP000264">
    <property type="protein sequence ID" value="ABD53985.1"/>
    <property type="molecule type" value="Genomic_DNA"/>
</dbReference>
<dbReference type="RefSeq" id="WP_011454192.1">
    <property type="nucleotide sequence ID" value="NC_007802.1"/>
</dbReference>
<dbReference type="SMR" id="Q28TH7"/>
<dbReference type="STRING" id="290400.Jann_1068"/>
<dbReference type="KEGG" id="jan:Jann_1068"/>
<dbReference type="eggNOG" id="COG0496">
    <property type="taxonomic scope" value="Bacteria"/>
</dbReference>
<dbReference type="HOGENOM" id="CLU_045192_1_2_5"/>
<dbReference type="OrthoDB" id="9780815at2"/>
<dbReference type="Proteomes" id="UP000008326">
    <property type="component" value="Chromosome"/>
</dbReference>
<dbReference type="GO" id="GO:0005737">
    <property type="term" value="C:cytoplasm"/>
    <property type="evidence" value="ECO:0007669"/>
    <property type="project" value="UniProtKB-SubCell"/>
</dbReference>
<dbReference type="GO" id="GO:0008254">
    <property type="term" value="F:3'-nucleotidase activity"/>
    <property type="evidence" value="ECO:0007669"/>
    <property type="project" value="TreeGrafter"/>
</dbReference>
<dbReference type="GO" id="GO:0008253">
    <property type="term" value="F:5'-nucleotidase activity"/>
    <property type="evidence" value="ECO:0007669"/>
    <property type="project" value="UniProtKB-UniRule"/>
</dbReference>
<dbReference type="GO" id="GO:0004309">
    <property type="term" value="F:exopolyphosphatase activity"/>
    <property type="evidence" value="ECO:0007669"/>
    <property type="project" value="TreeGrafter"/>
</dbReference>
<dbReference type="GO" id="GO:0046872">
    <property type="term" value="F:metal ion binding"/>
    <property type="evidence" value="ECO:0007669"/>
    <property type="project" value="UniProtKB-UniRule"/>
</dbReference>
<dbReference type="GO" id="GO:0000166">
    <property type="term" value="F:nucleotide binding"/>
    <property type="evidence" value="ECO:0007669"/>
    <property type="project" value="UniProtKB-KW"/>
</dbReference>
<dbReference type="Gene3D" id="3.40.1210.10">
    <property type="entry name" value="Survival protein SurE-like phosphatase/nucleotidase"/>
    <property type="match status" value="1"/>
</dbReference>
<dbReference type="HAMAP" id="MF_00060">
    <property type="entry name" value="SurE"/>
    <property type="match status" value="1"/>
</dbReference>
<dbReference type="InterPro" id="IPR030048">
    <property type="entry name" value="SurE"/>
</dbReference>
<dbReference type="InterPro" id="IPR002828">
    <property type="entry name" value="SurE-like_Pase/nucleotidase"/>
</dbReference>
<dbReference type="InterPro" id="IPR036523">
    <property type="entry name" value="SurE-like_sf"/>
</dbReference>
<dbReference type="NCBIfam" id="NF001490">
    <property type="entry name" value="PRK00346.1-4"/>
    <property type="match status" value="1"/>
</dbReference>
<dbReference type="NCBIfam" id="NF010541">
    <property type="entry name" value="PRK13931.1"/>
    <property type="match status" value="1"/>
</dbReference>
<dbReference type="NCBIfam" id="TIGR00087">
    <property type="entry name" value="surE"/>
    <property type="match status" value="1"/>
</dbReference>
<dbReference type="PANTHER" id="PTHR30457">
    <property type="entry name" value="5'-NUCLEOTIDASE SURE"/>
    <property type="match status" value="1"/>
</dbReference>
<dbReference type="PANTHER" id="PTHR30457:SF12">
    <property type="entry name" value="5'_3'-NUCLEOTIDASE SURE"/>
    <property type="match status" value="1"/>
</dbReference>
<dbReference type="Pfam" id="PF01975">
    <property type="entry name" value="SurE"/>
    <property type="match status" value="1"/>
</dbReference>
<dbReference type="SUPFAM" id="SSF64167">
    <property type="entry name" value="SurE-like"/>
    <property type="match status" value="1"/>
</dbReference>
<name>SURE_JANSC</name>
<accession>Q28TH7</accession>
<evidence type="ECO:0000255" key="1">
    <source>
        <dbReference type="HAMAP-Rule" id="MF_00060"/>
    </source>
</evidence>
<proteinExistence type="inferred from homology"/>
<keyword id="KW-0963">Cytoplasm</keyword>
<keyword id="KW-0378">Hydrolase</keyword>
<keyword id="KW-0479">Metal-binding</keyword>
<keyword id="KW-0547">Nucleotide-binding</keyword>
<keyword id="KW-1185">Reference proteome</keyword>
<reference key="1">
    <citation type="submission" date="2006-02" db="EMBL/GenBank/DDBJ databases">
        <title>Complete sequence of chromosome of Jannaschia sp. CCS1.</title>
        <authorList>
            <consortium name="US DOE Joint Genome Institute"/>
            <person name="Copeland A."/>
            <person name="Lucas S."/>
            <person name="Lapidus A."/>
            <person name="Barry K."/>
            <person name="Detter J.C."/>
            <person name="Glavina del Rio T."/>
            <person name="Hammon N."/>
            <person name="Israni S."/>
            <person name="Pitluck S."/>
            <person name="Brettin T."/>
            <person name="Bruce D."/>
            <person name="Han C."/>
            <person name="Tapia R."/>
            <person name="Gilna P."/>
            <person name="Chertkov O."/>
            <person name="Saunders E."/>
            <person name="Schmutz J."/>
            <person name="Larimer F."/>
            <person name="Land M."/>
            <person name="Kyrpides N."/>
            <person name="Lykidis A."/>
            <person name="Moran M.A."/>
            <person name="Belas R."/>
            <person name="Ye W."/>
            <person name="Buchan A."/>
            <person name="Gonzalez J.M."/>
            <person name="Schell M.A."/>
            <person name="Richardson P."/>
        </authorList>
    </citation>
    <scope>NUCLEOTIDE SEQUENCE [LARGE SCALE GENOMIC DNA]</scope>
    <source>
        <strain>CCS1</strain>
    </source>
</reference>
<feature type="chain" id="PRO_1000007742" description="5'-nucleotidase SurE">
    <location>
        <begin position="1"/>
        <end position="263"/>
    </location>
</feature>
<feature type="binding site" evidence="1">
    <location>
        <position position="8"/>
    </location>
    <ligand>
        <name>a divalent metal cation</name>
        <dbReference type="ChEBI" id="CHEBI:60240"/>
    </ligand>
</feature>
<feature type="binding site" evidence="1">
    <location>
        <position position="9"/>
    </location>
    <ligand>
        <name>a divalent metal cation</name>
        <dbReference type="ChEBI" id="CHEBI:60240"/>
    </ligand>
</feature>
<feature type="binding site" evidence="1">
    <location>
        <position position="43"/>
    </location>
    <ligand>
        <name>a divalent metal cation</name>
        <dbReference type="ChEBI" id="CHEBI:60240"/>
    </ligand>
</feature>
<feature type="binding site" evidence="1">
    <location>
        <position position="96"/>
    </location>
    <ligand>
        <name>a divalent metal cation</name>
        <dbReference type="ChEBI" id="CHEBI:60240"/>
    </ligand>
</feature>
<sequence length="263" mass="27482">MRILITNDDGINAPGLDVLHTIATDIAGPGGEVWTVAPAFEQSGVGHCISYTHPTMISEFGPRRFAAEGSPADCVLAGLHDVLKDTPPDLILSGVNKGNNSAENTLYSGTIGAAIEAAIQGLPSIALSQYYGPGNISLDNPFEAASAHGADVIRKILAAPGAFESHPYKLFYNVNFPPVAAADVKGIRAVGQGFREGGTGMGMRADMAPNGRKFLWITGSPQNVPSGADTDATVNIDGYISVTPMRADLTAYDQLQSLKDAIE</sequence>
<gene>
    <name evidence="1" type="primary">surE</name>
    <name type="ordered locus">Jann_1068</name>
</gene>